<accession>A7ZWA2</accession>
<gene>
    <name evidence="1" type="primary">hemL</name>
    <name type="ordered locus">EcHS_A0158</name>
</gene>
<protein>
    <recommendedName>
        <fullName evidence="1">Glutamate-1-semialdehyde 2,1-aminomutase</fullName>
        <shortName evidence="1">GSA</shortName>
        <ecNumber evidence="1">5.4.3.8</ecNumber>
    </recommendedName>
    <alternativeName>
        <fullName evidence="1">Glutamate-1-semialdehyde aminotransferase</fullName>
        <shortName evidence="1">GSA-AT</shortName>
    </alternativeName>
</protein>
<dbReference type="EC" id="5.4.3.8" evidence="1"/>
<dbReference type="EMBL" id="CP000802">
    <property type="protein sequence ID" value="ABV04556.1"/>
    <property type="molecule type" value="Genomic_DNA"/>
</dbReference>
<dbReference type="RefSeq" id="WP_000045291.1">
    <property type="nucleotide sequence ID" value="NC_009800.1"/>
</dbReference>
<dbReference type="SMR" id="A7ZWA2"/>
<dbReference type="KEGG" id="ecx:EcHS_A0158"/>
<dbReference type="HOGENOM" id="CLU_016922_1_5_6"/>
<dbReference type="UniPathway" id="UPA00251">
    <property type="reaction ID" value="UER00317"/>
</dbReference>
<dbReference type="GO" id="GO:0005737">
    <property type="term" value="C:cytoplasm"/>
    <property type="evidence" value="ECO:0007669"/>
    <property type="project" value="UniProtKB-SubCell"/>
</dbReference>
<dbReference type="GO" id="GO:0042286">
    <property type="term" value="F:glutamate-1-semialdehyde 2,1-aminomutase activity"/>
    <property type="evidence" value="ECO:0007669"/>
    <property type="project" value="UniProtKB-UniRule"/>
</dbReference>
<dbReference type="GO" id="GO:0030170">
    <property type="term" value="F:pyridoxal phosphate binding"/>
    <property type="evidence" value="ECO:0007669"/>
    <property type="project" value="InterPro"/>
</dbReference>
<dbReference type="GO" id="GO:0008483">
    <property type="term" value="F:transaminase activity"/>
    <property type="evidence" value="ECO:0007669"/>
    <property type="project" value="InterPro"/>
</dbReference>
<dbReference type="GO" id="GO:0006782">
    <property type="term" value="P:protoporphyrinogen IX biosynthetic process"/>
    <property type="evidence" value="ECO:0007669"/>
    <property type="project" value="UniProtKB-UniRule"/>
</dbReference>
<dbReference type="CDD" id="cd00610">
    <property type="entry name" value="OAT_like"/>
    <property type="match status" value="1"/>
</dbReference>
<dbReference type="FunFam" id="3.40.640.10:FF:000021">
    <property type="entry name" value="Glutamate-1-semialdehyde 2,1-aminomutase"/>
    <property type="match status" value="1"/>
</dbReference>
<dbReference type="FunFam" id="3.90.1150.10:FF:000012">
    <property type="entry name" value="Glutamate-1-semialdehyde 2,1-aminomutase"/>
    <property type="match status" value="1"/>
</dbReference>
<dbReference type="Gene3D" id="3.90.1150.10">
    <property type="entry name" value="Aspartate Aminotransferase, domain 1"/>
    <property type="match status" value="1"/>
</dbReference>
<dbReference type="Gene3D" id="3.40.640.10">
    <property type="entry name" value="Type I PLP-dependent aspartate aminotransferase-like (Major domain)"/>
    <property type="match status" value="1"/>
</dbReference>
<dbReference type="HAMAP" id="MF_00375">
    <property type="entry name" value="HemL_aminotrans_3"/>
    <property type="match status" value="1"/>
</dbReference>
<dbReference type="InterPro" id="IPR004639">
    <property type="entry name" value="4pyrrol_synth_GluAld_NH2Trfase"/>
</dbReference>
<dbReference type="InterPro" id="IPR005814">
    <property type="entry name" value="Aminotrans_3"/>
</dbReference>
<dbReference type="InterPro" id="IPR049704">
    <property type="entry name" value="Aminotrans_3_PPA_site"/>
</dbReference>
<dbReference type="InterPro" id="IPR015424">
    <property type="entry name" value="PyrdxlP-dep_Trfase"/>
</dbReference>
<dbReference type="InterPro" id="IPR015421">
    <property type="entry name" value="PyrdxlP-dep_Trfase_major"/>
</dbReference>
<dbReference type="InterPro" id="IPR015422">
    <property type="entry name" value="PyrdxlP-dep_Trfase_small"/>
</dbReference>
<dbReference type="NCBIfam" id="TIGR00713">
    <property type="entry name" value="hemL"/>
    <property type="match status" value="1"/>
</dbReference>
<dbReference type="NCBIfam" id="NF000818">
    <property type="entry name" value="PRK00062.1"/>
    <property type="match status" value="1"/>
</dbReference>
<dbReference type="PANTHER" id="PTHR43713">
    <property type="entry name" value="GLUTAMATE-1-SEMIALDEHYDE 2,1-AMINOMUTASE"/>
    <property type="match status" value="1"/>
</dbReference>
<dbReference type="PANTHER" id="PTHR43713:SF3">
    <property type="entry name" value="GLUTAMATE-1-SEMIALDEHYDE 2,1-AMINOMUTASE 1, CHLOROPLASTIC-RELATED"/>
    <property type="match status" value="1"/>
</dbReference>
<dbReference type="Pfam" id="PF00202">
    <property type="entry name" value="Aminotran_3"/>
    <property type="match status" value="1"/>
</dbReference>
<dbReference type="SUPFAM" id="SSF53383">
    <property type="entry name" value="PLP-dependent transferases"/>
    <property type="match status" value="1"/>
</dbReference>
<dbReference type="PROSITE" id="PS00600">
    <property type="entry name" value="AA_TRANSFER_CLASS_3"/>
    <property type="match status" value="1"/>
</dbReference>
<evidence type="ECO:0000255" key="1">
    <source>
        <dbReference type="HAMAP-Rule" id="MF_00375"/>
    </source>
</evidence>
<feature type="chain" id="PRO_1000059986" description="Glutamate-1-semialdehyde 2,1-aminomutase">
    <location>
        <begin position="1"/>
        <end position="426"/>
    </location>
</feature>
<feature type="modified residue" description="N6-(pyridoxal phosphate)lysine" evidence="1">
    <location>
        <position position="265"/>
    </location>
</feature>
<name>GSA_ECOHS</name>
<proteinExistence type="inferred from homology"/>
<reference key="1">
    <citation type="journal article" date="2008" name="J. Bacteriol.">
        <title>The pangenome structure of Escherichia coli: comparative genomic analysis of E. coli commensal and pathogenic isolates.</title>
        <authorList>
            <person name="Rasko D.A."/>
            <person name="Rosovitz M.J."/>
            <person name="Myers G.S.A."/>
            <person name="Mongodin E.F."/>
            <person name="Fricke W.F."/>
            <person name="Gajer P."/>
            <person name="Crabtree J."/>
            <person name="Sebaihia M."/>
            <person name="Thomson N.R."/>
            <person name="Chaudhuri R."/>
            <person name="Henderson I.R."/>
            <person name="Sperandio V."/>
            <person name="Ravel J."/>
        </authorList>
    </citation>
    <scope>NUCLEOTIDE SEQUENCE [LARGE SCALE GENOMIC DNA]</scope>
    <source>
        <strain>HS</strain>
    </source>
</reference>
<comment type="catalytic activity">
    <reaction evidence="1">
        <text>(S)-4-amino-5-oxopentanoate = 5-aminolevulinate</text>
        <dbReference type="Rhea" id="RHEA:14265"/>
        <dbReference type="ChEBI" id="CHEBI:57501"/>
        <dbReference type="ChEBI" id="CHEBI:356416"/>
        <dbReference type="EC" id="5.4.3.8"/>
    </reaction>
</comment>
<comment type="cofactor">
    <cofactor evidence="1">
        <name>pyridoxal 5'-phosphate</name>
        <dbReference type="ChEBI" id="CHEBI:597326"/>
    </cofactor>
</comment>
<comment type="pathway">
    <text evidence="1">Porphyrin-containing compound metabolism; protoporphyrin-IX biosynthesis; 5-aminolevulinate from L-glutamyl-tRNA(Glu): step 2/2.</text>
</comment>
<comment type="subunit">
    <text evidence="1">Homodimer.</text>
</comment>
<comment type="subcellular location">
    <subcellularLocation>
        <location evidence="1">Cytoplasm</location>
    </subcellularLocation>
</comment>
<comment type="similarity">
    <text evidence="1">Belongs to the class-III pyridoxal-phosphate-dependent aminotransferase family. HemL subfamily.</text>
</comment>
<keyword id="KW-0963">Cytoplasm</keyword>
<keyword id="KW-0413">Isomerase</keyword>
<keyword id="KW-0627">Porphyrin biosynthesis</keyword>
<keyword id="KW-0663">Pyridoxal phosphate</keyword>
<organism>
    <name type="scientific">Escherichia coli O9:H4 (strain HS)</name>
    <dbReference type="NCBI Taxonomy" id="331112"/>
    <lineage>
        <taxon>Bacteria</taxon>
        <taxon>Pseudomonadati</taxon>
        <taxon>Pseudomonadota</taxon>
        <taxon>Gammaproteobacteria</taxon>
        <taxon>Enterobacterales</taxon>
        <taxon>Enterobacteriaceae</taxon>
        <taxon>Escherichia</taxon>
    </lineage>
</organism>
<sequence length="426" mass="45370">MSKSENLYSAARELIPGGVNSPVRAFTGVGGTPLFIEKADGAYLYDVDGKAYIDYVGSWGPMVLGHNHPAIRNAVIEAAERGLSFGAPTEMEVKMAQLVTELVPTMDMVRMVNSGTEATMSAIRLARGFTGRDKIIKFEGCYHGHADCLLVKAGSGALTLGQPNSPGVPADFAKHTLTCTYNDLASVRAAFEQYPQEIACIIVEPVAGNMNCVPPLPEFLPGLRALCDEFGALLIIDEVMTGFRVALAGAQDYYGVEPDLTCLGKIIGGGMPVGAFGGRRDVMDALAPTGPVYQAGTLSGNPIAMAAGFACLNEVAQPGVHETLDELTTRLAEGLLEAAEEAGIPLVVNHVGGMFGIFFTDAESVTCYQDVMACDVERFKRFFHMMLDEGVYLAPSAFEAGFMSVAHSMEDINNTIDAARRVFAKL</sequence>